<gene>
    <name evidence="1" type="primary">mnmE</name>
    <name evidence="1" type="synonym">trmE</name>
    <name type="ordered locus">RPC_0291</name>
</gene>
<accession>Q21CM0</accession>
<sequence length="449" mass="48381">MHSRQQTIFALSSGRPPAALAIVRVSGPEAAIVLERIAGRLPPPRQAMRALLHDASAQPIDDAIVLWFPAPRSATGEDVAEFHIHGGRAVLSAVIAAIGTNENLRAAEPGEFTRRAFENGKLDLTEAEGLDDLIHADTERQRRQALRQLQGLLGDRARDWRGEIIAASALVEAAIDFADEGDVPDELIAPAKAKIEILLDEIEDVLAQEGRSEKLRDGLVVAITGPPNVGKSTLMNQLARREVAIVSPHAGTTRDIIEVHLDLDGYPVTVIDTAGIREAIDPVEQEGVRRARSRAAEADLRLWLVDAQAAGDGEDALRAWMAQGQNGFWVVRNKVDVAGEPTGELSATGWPCFSISAANGRGVAELIAALGKFAAAHLGGESALITRARHRDLLRQTADALGRAIDLPEQVELIAEELRIAAHRLGQLLGRVDVEDILDVIFREFCVGK</sequence>
<comment type="function">
    <text evidence="1">Exhibits a very high intrinsic GTPase hydrolysis rate. Involved in the addition of a carboxymethylaminomethyl (cmnm) group at the wobble position (U34) of certain tRNAs, forming tRNA-cmnm(5)s(2)U34.</text>
</comment>
<comment type="cofactor">
    <cofactor evidence="1">
        <name>K(+)</name>
        <dbReference type="ChEBI" id="CHEBI:29103"/>
    </cofactor>
    <text evidence="1">Binds 1 potassium ion per subunit.</text>
</comment>
<comment type="subunit">
    <text evidence="1">Homodimer. Heterotetramer of two MnmE and two MnmG subunits.</text>
</comment>
<comment type="subcellular location">
    <subcellularLocation>
        <location evidence="1">Cytoplasm</location>
    </subcellularLocation>
</comment>
<comment type="similarity">
    <text evidence="1">Belongs to the TRAFAC class TrmE-Era-EngA-EngB-Septin-like GTPase superfamily. TrmE GTPase family.</text>
</comment>
<organism>
    <name type="scientific">Rhodopseudomonas palustris (strain BisB18)</name>
    <dbReference type="NCBI Taxonomy" id="316056"/>
    <lineage>
        <taxon>Bacteria</taxon>
        <taxon>Pseudomonadati</taxon>
        <taxon>Pseudomonadota</taxon>
        <taxon>Alphaproteobacteria</taxon>
        <taxon>Hyphomicrobiales</taxon>
        <taxon>Nitrobacteraceae</taxon>
        <taxon>Rhodopseudomonas</taxon>
    </lineage>
</organism>
<reference key="1">
    <citation type="submission" date="2006-03" db="EMBL/GenBank/DDBJ databases">
        <title>Complete sequence of Rhodopseudomonas palustris BisB18.</title>
        <authorList>
            <consortium name="US DOE Joint Genome Institute"/>
            <person name="Copeland A."/>
            <person name="Lucas S."/>
            <person name="Lapidus A."/>
            <person name="Barry K."/>
            <person name="Detter J.C."/>
            <person name="Glavina del Rio T."/>
            <person name="Hammon N."/>
            <person name="Israni S."/>
            <person name="Dalin E."/>
            <person name="Tice H."/>
            <person name="Pitluck S."/>
            <person name="Chain P."/>
            <person name="Malfatti S."/>
            <person name="Shin M."/>
            <person name="Vergez L."/>
            <person name="Schmutz J."/>
            <person name="Larimer F."/>
            <person name="Land M."/>
            <person name="Hauser L."/>
            <person name="Pelletier D.A."/>
            <person name="Kyrpides N."/>
            <person name="Anderson I."/>
            <person name="Oda Y."/>
            <person name="Harwood C.S."/>
            <person name="Richardson P."/>
        </authorList>
    </citation>
    <scope>NUCLEOTIDE SEQUENCE [LARGE SCALE GENOMIC DNA]</scope>
    <source>
        <strain>BisB18</strain>
    </source>
</reference>
<feature type="chain" id="PRO_0000345892" description="tRNA modification GTPase MnmE">
    <location>
        <begin position="1"/>
        <end position="449"/>
    </location>
</feature>
<feature type="domain" description="TrmE-type G">
    <location>
        <begin position="218"/>
        <end position="375"/>
    </location>
</feature>
<feature type="binding site" evidence="1">
    <location>
        <position position="24"/>
    </location>
    <ligand>
        <name>(6S)-5-formyl-5,6,7,8-tetrahydrofolate</name>
        <dbReference type="ChEBI" id="CHEBI:57457"/>
    </ligand>
</feature>
<feature type="binding site" evidence="1">
    <location>
        <position position="81"/>
    </location>
    <ligand>
        <name>(6S)-5-formyl-5,6,7,8-tetrahydrofolate</name>
        <dbReference type="ChEBI" id="CHEBI:57457"/>
    </ligand>
</feature>
<feature type="binding site" evidence="1">
    <location>
        <position position="121"/>
    </location>
    <ligand>
        <name>(6S)-5-formyl-5,6,7,8-tetrahydrofolate</name>
        <dbReference type="ChEBI" id="CHEBI:57457"/>
    </ligand>
</feature>
<feature type="binding site" evidence="1">
    <location>
        <begin position="228"/>
        <end position="233"/>
    </location>
    <ligand>
        <name>GTP</name>
        <dbReference type="ChEBI" id="CHEBI:37565"/>
    </ligand>
</feature>
<feature type="binding site" evidence="1">
    <location>
        <position position="232"/>
    </location>
    <ligand>
        <name>Mg(2+)</name>
        <dbReference type="ChEBI" id="CHEBI:18420"/>
    </ligand>
</feature>
<feature type="binding site" evidence="1">
    <location>
        <begin position="247"/>
        <end position="253"/>
    </location>
    <ligand>
        <name>GTP</name>
        <dbReference type="ChEBI" id="CHEBI:37565"/>
    </ligand>
</feature>
<feature type="binding site" evidence="1">
    <location>
        <position position="253"/>
    </location>
    <ligand>
        <name>Mg(2+)</name>
        <dbReference type="ChEBI" id="CHEBI:18420"/>
    </ligand>
</feature>
<feature type="binding site" evidence="1">
    <location>
        <begin position="272"/>
        <end position="275"/>
    </location>
    <ligand>
        <name>GTP</name>
        <dbReference type="ChEBI" id="CHEBI:37565"/>
    </ligand>
</feature>
<feature type="binding site" evidence="1">
    <location>
        <position position="449"/>
    </location>
    <ligand>
        <name>(6S)-5-formyl-5,6,7,8-tetrahydrofolate</name>
        <dbReference type="ChEBI" id="CHEBI:57457"/>
    </ligand>
</feature>
<keyword id="KW-0963">Cytoplasm</keyword>
<keyword id="KW-0342">GTP-binding</keyword>
<keyword id="KW-0378">Hydrolase</keyword>
<keyword id="KW-0460">Magnesium</keyword>
<keyword id="KW-0479">Metal-binding</keyword>
<keyword id="KW-0547">Nucleotide-binding</keyword>
<keyword id="KW-0630">Potassium</keyword>
<keyword id="KW-0819">tRNA processing</keyword>
<name>MNME_RHOPB</name>
<evidence type="ECO:0000255" key="1">
    <source>
        <dbReference type="HAMAP-Rule" id="MF_00379"/>
    </source>
</evidence>
<proteinExistence type="inferred from homology"/>
<dbReference type="EC" id="3.6.-.-" evidence="1"/>
<dbReference type="EMBL" id="CP000301">
    <property type="protein sequence ID" value="ABD85866.1"/>
    <property type="molecule type" value="Genomic_DNA"/>
</dbReference>
<dbReference type="SMR" id="Q21CM0"/>
<dbReference type="STRING" id="316056.RPC_0291"/>
<dbReference type="KEGG" id="rpc:RPC_0291"/>
<dbReference type="eggNOG" id="COG0486">
    <property type="taxonomic scope" value="Bacteria"/>
</dbReference>
<dbReference type="HOGENOM" id="CLU_019624_3_1_5"/>
<dbReference type="OrthoDB" id="9805918at2"/>
<dbReference type="GO" id="GO:0005737">
    <property type="term" value="C:cytoplasm"/>
    <property type="evidence" value="ECO:0007669"/>
    <property type="project" value="UniProtKB-SubCell"/>
</dbReference>
<dbReference type="GO" id="GO:0005525">
    <property type="term" value="F:GTP binding"/>
    <property type="evidence" value="ECO:0007669"/>
    <property type="project" value="UniProtKB-UniRule"/>
</dbReference>
<dbReference type="GO" id="GO:0003924">
    <property type="term" value="F:GTPase activity"/>
    <property type="evidence" value="ECO:0007669"/>
    <property type="project" value="UniProtKB-UniRule"/>
</dbReference>
<dbReference type="GO" id="GO:0046872">
    <property type="term" value="F:metal ion binding"/>
    <property type="evidence" value="ECO:0007669"/>
    <property type="project" value="UniProtKB-KW"/>
</dbReference>
<dbReference type="GO" id="GO:0030488">
    <property type="term" value="P:tRNA methylation"/>
    <property type="evidence" value="ECO:0007669"/>
    <property type="project" value="TreeGrafter"/>
</dbReference>
<dbReference type="GO" id="GO:0002098">
    <property type="term" value="P:tRNA wobble uridine modification"/>
    <property type="evidence" value="ECO:0007669"/>
    <property type="project" value="TreeGrafter"/>
</dbReference>
<dbReference type="CDD" id="cd04164">
    <property type="entry name" value="trmE"/>
    <property type="match status" value="1"/>
</dbReference>
<dbReference type="CDD" id="cd14858">
    <property type="entry name" value="TrmE_N"/>
    <property type="match status" value="1"/>
</dbReference>
<dbReference type="FunFam" id="3.30.1360.120:FF:000007">
    <property type="entry name" value="tRNA modification GTPase GTPBP3, mitochondrial"/>
    <property type="match status" value="1"/>
</dbReference>
<dbReference type="Gene3D" id="3.40.50.300">
    <property type="entry name" value="P-loop containing nucleotide triphosphate hydrolases"/>
    <property type="match status" value="1"/>
</dbReference>
<dbReference type="Gene3D" id="3.30.1360.120">
    <property type="entry name" value="Probable tRNA modification gtpase trme, domain 1"/>
    <property type="match status" value="1"/>
</dbReference>
<dbReference type="Gene3D" id="1.20.120.430">
    <property type="entry name" value="tRNA modification GTPase MnmE domain 2"/>
    <property type="match status" value="1"/>
</dbReference>
<dbReference type="HAMAP" id="MF_00379">
    <property type="entry name" value="GTPase_MnmE"/>
    <property type="match status" value="1"/>
</dbReference>
<dbReference type="InterPro" id="IPR031168">
    <property type="entry name" value="G_TrmE"/>
</dbReference>
<dbReference type="InterPro" id="IPR006073">
    <property type="entry name" value="GTP-bd"/>
</dbReference>
<dbReference type="InterPro" id="IPR018948">
    <property type="entry name" value="GTP-bd_TrmE_N"/>
</dbReference>
<dbReference type="InterPro" id="IPR004520">
    <property type="entry name" value="GTPase_MnmE"/>
</dbReference>
<dbReference type="InterPro" id="IPR027368">
    <property type="entry name" value="MnmE_dom2"/>
</dbReference>
<dbReference type="InterPro" id="IPR025867">
    <property type="entry name" value="MnmE_helical"/>
</dbReference>
<dbReference type="InterPro" id="IPR027417">
    <property type="entry name" value="P-loop_NTPase"/>
</dbReference>
<dbReference type="InterPro" id="IPR005225">
    <property type="entry name" value="Small_GTP-bd"/>
</dbReference>
<dbReference type="InterPro" id="IPR027266">
    <property type="entry name" value="TrmE/GcvT_dom1"/>
</dbReference>
<dbReference type="NCBIfam" id="TIGR00450">
    <property type="entry name" value="mnmE_trmE_thdF"/>
    <property type="match status" value="1"/>
</dbReference>
<dbReference type="NCBIfam" id="NF003661">
    <property type="entry name" value="PRK05291.1-3"/>
    <property type="match status" value="1"/>
</dbReference>
<dbReference type="NCBIfam" id="TIGR00231">
    <property type="entry name" value="small_GTP"/>
    <property type="match status" value="1"/>
</dbReference>
<dbReference type="PANTHER" id="PTHR42714">
    <property type="entry name" value="TRNA MODIFICATION GTPASE GTPBP3"/>
    <property type="match status" value="1"/>
</dbReference>
<dbReference type="PANTHER" id="PTHR42714:SF2">
    <property type="entry name" value="TRNA MODIFICATION GTPASE GTPBP3, MITOCHONDRIAL"/>
    <property type="match status" value="1"/>
</dbReference>
<dbReference type="Pfam" id="PF01926">
    <property type="entry name" value="MMR_HSR1"/>
    <property type="match status" value="1"/>
</dbReference>
<dbReference type="Pfam" id="PF12631">
    <property type="entry name" value="MnmE_helical"/>
    <property type="match status" value="1"/>
</dbReference>
<dbReference type="Pfam" id="PF10396">
    <property type="entry name" value="TrmE_N"/>
    <property type="match status" value="1"/>
</dbReference>
<dbReference type="SUPFAM" id="SSF52540">
    <property type="entry name" value="P-loop containing nucleoside triphosphate hydrolases"/>
    <property type="match status" value="1"/>
</dbReference>
<dbReference type="SUPFAM" id="SSF116878">
    <property type="entry name" value="TrmE connector domain"/>
    <property type="match status" value="1"/>
</dbReference>
<dbReference type="PROSITE" id="PS51709">
    <property type="entry name" value="G_TRME"/>
    <property type="match status" value="1"/>
</dbReference>
<protein>
    <recommendedName>
        <fullName evidence="1">tRNA modification GTPase MnmE</fullName>
        <ecNumber evidence="1">3.6.-.-</ecNumber>
    </recommendedName>
</protein>